<organism>
    <name type="scientific">Agrobacterium fabrum (strain C58 / ATCC 33970)</name>
    <name type="common">Agrobacterium tumefaciens (strain C58)</name>
    <dbReference type="NCBI Taxonomy" id="176299"/>
    <lineage>
        <taxon>Bacteria</taxon>
        <taxon>Pseudomonadati</taxon>
        <taxon>Pseudomonadota</taxon>
        <taxon>Alphaproteobacteria</taxon>
        <taxon>Hyphomicrobiales</taxon>
        <taxon>Rhizobiaceae</taxon>
        <taxon>Rhizobium/Agrobacterium group</taxon>
        <taxon>Agrobacterium</taxon>
        <taxon>Agrobacterium tumefaciens complex</taxon>
    </lineage>
</organism>
<evidence type="ECO:0000255" key="1">
    <source>
        <dbReference type="HAMAP-Rule" id="MF_00225"/>
    </source>
</evidence>
<gene>
    <name evidence="1" type="primary">pyrD</name>
    <name type="ordered locus">Atu0486</name>
    <name type="ORF">AGR_C_861</name>
</gene>
<keyword id="KW-1003">Cell membrane</keyword>
<keyword id="KW-0285">Flavoprotein</keyword>
<keyword id="KW-0288">FMN</keyword>
<keyword id="KW-0472">Membrane</keyword>
<keyword id="KW-0560">Oxidoreductase</keyword>
<keyword id="KW-0665">Pyrimidine biosynthesis</keyword>
<keyword id="KW-1185">Reference proteome</keyword>
<dbReference type="EC" id="1.3.5.2" evidence="1"/>
<dbReference type="EMBL" id="AE007869">
    <property type="protein sequence ID" value="AAK86299.2"/>
    <property type="molecule type" value="Genomic_DNA"/>
</dbReference>
<dbReference type="RefSeq" id="NP_353514.2">
    <property type="nucleotide sequence ID" value="NC_003062.2"/>
</dbReference>
<dbReference type="RefSeq" id="WP_010970931.1">
    <property type="nucleotide sequence ID" value="NC_003062.2"/>
</dbReference>
<dbReference type="SMR" id="A9CK85"/>
<dbReference type="STRING" id="176299.Atu0486"/>
<dbReference type="EnsemblBacteria" id="AAK86299">
    <property type="protein sequence ID" value="AAK86299"/>
    <property type="gene ID" value="Atu0486"/>
</dbReference>
<dbReference type="GeneID" id="1132524"/>
<dbReference type="KEGG" id="atu:Atu0486"/>
<dbReference type="PATRIC" id="fig|176299.10.peg.485"/>
<dbReference type="eggNOG" id="COG0167">
    <property type="taxonomic scope" value="Bacteria"/>
</dbReference>
<dbReference type="HOGENOM" id="CLU_013640_2_1_5"/>
<dbReference type="OrthoDB" id="9802377at2"/>
<dbReference type="PhylomeDB" id="A9CK85"/>
<dbReference type="UniPathway" id="UPA00070">
    <property type="reaction ID" value="UER00946"/>
</dbReference>
<dbReference type="Proteomes" id="UP000000813">
    <property type="component" value="Chromosome circular"/>
</dbReference>
<dbReference type="GO" id="GO:0005737">
    <property type="term" value="C:cytoplasm"/>
    <property type="evidence" value="ECO:0007669"/>
    <property type="project" value="InterPro"/>
</dbReference>
<dbReference type="GO" id="GO:0005886">
    <property type="term" value="C:plasma membrane"/>
    <property type="evidence" value="ECO:0007669"/>
    <property type="project" value="UniProtKB-SubCell"/>
</dbReference>
<dbReference type="GO" id="GO:0106430">
    <property type="term" value="F:dihydroorotate dehydrogenase (quinone) activity"/>
    <property type="evidence" value="ECO:0007669"/>
    <property type="project" value="UniProtKB-EC"/>
</dbReference>
<dbReference type="GO" id="GO:0006207">
    <property type="term" value="P:'de novo' pyrimidine nucleobase biosynthetic process"/>
    <property type="evidence" value="ECO:0007669"/>
    <property type="project" value="InterPro"/>
</dbReference>
<dbReference type="GO" id="GO:0044205">
    <property type="term" value="P:'de novo' UMP biosynthetic process"/>
    <property type="evidence" value="ECO:0007669"/>
    <property type="project" value="UniProtKB-UniRule"/>
</dbReference>
<dbReference type="CDD" id="cd04738">
    <property type="entry name" value="DHOD_2_like"/>
    <property type="match status" value="1"/>
</dbReference>
<dbReference type="Gene3D" id="3.20.20.70">
    <property type="entry name" value="Aldolase class I"/>
    <property type="match status" value="1"/>
</dbReference>
<dbReference type="HAMAP" id="MF_00225">
    <property type="entry name" value="DHO_dh_type2"/>
    <property type="match status" value="1"/>
</dbReference>
<dbReference type="InterPro" id="IPR013785">
    <property type="entry name" value="Aldolase_TIM"/>
</dbReference>
<dbReference type="InterPro" id="IPR050074">
    <property type="entry name" value="DHO_dehydrogenase"/>
</dbReference>
<dbReference type="InterPro" id="IPR005719">
    <property type="entry name" value="Dihydroorotate_DH_2"/>
</dbReference>
<dbReference type="InterPro" id="IPR005720">
    <property type="entry name" value="Dihydroorotate_DH_cat"/>
</dbReference>
<dbReference type="InterPro" id="IPR001295">
    <property type="entry name" value="Dihydroorotate_DH_CS"/>
</dbReference>
<dbReference type="NCBIfam" id="NF003645">
    <property type="entry name" value="PRK05286.1-2"/>
    <property type="match status" value="1"/>
</dbReference>
<dbReference type="NCBIfam" id="NF003652">
    <property type="entry name" value="PRK05286.2-5"/>
    <property type="match status" value="1"/>
</dbReference>
<dbReference type="NCBIfam" id="TIGR01036">
    <property type="entry name" value="pyrD_sub2"/>
    <property type="match status" value="1"/>
</dbReference>
<dbReference type="PANTHER" id="PTHR48109:SF4">
    <property type="entry name" value="DIHYDROOROTATE DEHYDROGENASE (QUINONE), MITOCHONDRIAL"/>
    <property type="match status" value="1"/>
</dbReference>
<dbReference type="PANTHER" id="PTHR48109">
    <property type="entry name" value="DIHYDROOROTATE DEHYDROGENASE (QUINONE), MITOCHONDRIAL-RELATED"/>
    <property type="match status" value="1"/>
</dbReference>
<dbReference type="Pfam" id="PF01180">
    <property type="entry name" value="DHO_dh"/>
    <property type="match status" value="1"/>
</dbReference>
<dbReference type="SUPFAM" id="SSF51395">
    <property type="entry name" value="FMN-linked oxidoreductases"/>
    <property type="match status" value="1"/>
</dbReference>
<dbReference type="PROSITE" id="PS00911">
    <property type="entry name" value="DHODEHASE_1"/>
    <property type="match status" value="1"/>
</dbReference>
<dbReference type="PROSITE" id="PS00912">
    <property type="entry name" value="DHODEHASE_2"/>
    <property type="match status" value="1"/>
</dbReference>
<proteinExistence type="inferred from homology"/>
<protein>
    <recommendedName>
        <fullName evidence="1">Dihydroorotate dehydrogenase (quinone)</fullName>
        <ecNumber evidence="1">1.3.5.2</ecNumber>
    </recommendedName>
    <alternativeName>
        <fullName evidence="1">DHOdehase</fullName>
        <shortName evidence="1">DHOD</shortName>
        <shortName evidence="1">DHODase</shortName>
    </alternativeName>
    <alternativeName>
        <fullName evidence="1">Dihydroorotate oxidase</fullName>
    </alternativeName>
</protein>
<feature type="chain" id="PRO_1000058680" description="Dihydroorotate dehydrogenase (quinone)">
    <location>
        <begin position="1"/>
        <end position="363"/>
    </location>
</feature>
<feature type="active site" description="Nucleophile" evidence="1">
    <location>
        <position position="173"/>
    </location>
</feature>
<feature type="binding site" evidence="1">
    <location>
        <begin position="62"/>
        <end position="66"/>
    </location>
    <ligand>
        <name>FMN</name>
        <dbReference type="ChEBI" id="CHEBI:58210"/>
    </ligand>
</feature>
<feature type="binding site" evidence="1">
    <location>
        <position position="66"/>
    </location>
    <ligand>
        <name>substrate</name>
    </ligand>
</feature>
<feature type="binding site" evidence="1">
    <location>
        <position position="86"/>
    </location>
    <ligand>
        <name>FMN</name>
        <dbReference type="ChEBI" id="CHEBI:58210"/>
    </ligand>
</feature>
<feature type="binding site" evidence="1">
    <location>
        <begin position="111"/>
        <end position="115"/>
    </location>
    <ligand>
        <name>substrate</name>
    </ligand>
</feature>
<feature type="binding site" evidence="1">
    <location>
        <position position="139"/>
    </location>
    <ligand>
        <name>FMN</name>
        <dbReference type="ChEBI" id="CHEBI:58210"/>
    </ligand>
</feature>
<feature type="binding site" evidence="1">
    <location>
        <position position="170"/>
    </location>
    <ligand>
        <name>FMN</name>
        <dbReference type="ChEBI" id="CHEBI:58210"/>
    </ligand>
</feature>
<feature type="binding site" evidence="1">
    <location>
        <position position="170"/>
    </location>
    <ligand>
        <name>substrate</name>
    </ligand>
</feature>
<feature type="binding site" evidence="1">
    <location>
        <position position="175"/>
    </location>
    <ligand>
        <name>substrate</name>
    </ligand>
</feature>
<feature type="binding site" evidence="1">
    <location>
        <position position="215"/>
    </location>
    <ligand>
        <name>FMN</name>
        <dbReference type="ChEBI" id="CHEBI:58210"/>
    </ligand>
</feature>
<feature type="binding site" evidence="1">
    <location>
        <position position="243"/>
    </location>
    <ligand>
        <name>FMN</name>
        <dbReference type="ChEBI" id="CHEBI:58210"/>
    </ligand>
</feature>
<feature type="binding site" evidence="1">
    <location>
        <begin position="244"/>
        <end position="245"/>
    </location>
    <ligand>
        <name>substrate</name>
    </ligand>
</feature>
<feature type="binding site" evidence="1">
    <location>
        <position position="266"/>
    </location>
    <ligand>
        <name>FMN</name>
        <dbReference type="ChEBI" id="CHEBI:58210"/>
    </ligand>
</feature>
<feature type="binding site" evidence="1">
    <location>
        <position position="295"/>
    </location>
    <ligand>
        <name>FMN</name>
        <dbReference type="ChEBI" id="CHEBI:58210"/>
    </ligand>
</feature>
<feature type="binding site" evidence="1">
    <location>
        <begin position="316"/>
        <end position="317"/>
    </location>
    <ligand>
        <name>FMN</name>
        <dbReference type="ChEBI" id="CHEBI:58210"/>
    </ligand>
</feature>
<accession>A9CK85</accession>
<comment type="function">
    <text evidence="1">Catalyzes the conversion of dihydroorotate to orotate with quinone as electron acceptor.</text>
</comment>
<comment type="catalytic activity">
    <reaction evidence="1">
        <text>(S)-dihydroorotate + a quinone = orotate + a quinol</text>
        <dbReference type="Rhea" id="RHEA:30187"/>
        <dbReference type="ChEBI" id="CHEBI:24646"/>
        <dbReference type="ChEBI" id="CHEBI:30839"/>
        <dbReference type="ChEBI" id="CHEBI:30864"/>
        <dbReference type="ChEBI" id="CHEBI:132124"/>
        <dbReference type="EC" id="1.3.5.2"/>
    </reaction>
</comment>
<comment type="cofactor">
    <cofactor evidence="1">
        <name>FMN</name>
        <dbReference type="ChEBI" id="CHEBI:58210"/>
    </cofactor>
    <text evidence="1">Binds 1 FMN per subunit.</text>
</comment>
<comment type="pathway">
    <text evidence="1">Pyrimidine metabolism; UMP biosynthesis via de novo pathway; orotate from (S)-dihydroorotate (quinone route): step 1/1.</text>
</comment>
<comment type="subunit">
    <text evidence="1">Monomer.</text>
</comment>
<comment type="subcellular location">
    <subcellularLocation>
        <location evidence="1">Cell membrane</location>
        <topology evidence="1">Peripheral membrane protein</topology>
    </subcellularLocation>
</comment>
<comment type="similarity">
    <text evidence="1">Belongs to the dihydroorotate dehydrogenase family. Type 2 subfamily.</text>
</comment>
<name>PYRD_AGRFC</name>
<reference key="1">
    <citation type="journal article" date="2001" name="Science">
        <title>The genome of the natural genetic engineer Agrobacterium tumefaciens C58.</title>
        <authorList>
            <person name="Wood D.W."/>
            <person name="Setubal J.C."/>
            <person name="Kaul R."/>
            <person name="Monks D.E."/>
            <person name="Kitajima J.P."/>
            <person name="Okura V.K."/>
            <person name="Zhou Y."/>
            <person name="Chen L."/>
            <person name="Wood G.E."/>
            <person name="Almeida N.F. Jr."/>
            <person name="Woo L."/>
            <person name="Chen Y."/>
            <person name="Paulsen I.T."/>
            <person name="Eisen J.A."/>
            <person name="Karp P.D."/>
            <person name="Bovee D. Sr."/>
            <person name="Chapman P."/>
            <person name="Clendenning J."/>
            <person name="Deatherage G."/>
            <person name="Gillet W."/>
            <person name="Grant C."/>
            <person name="Kutyavin T."/>
            <person name="Levy R."/>
            <person name="Li M.-J."/>
            <person name="McClelland E."/>
            <person name="Palmieri A."/>
            <person name="Raymond C."/>
            <person name="Rouse G."/>
            <person name="Saenphimmachak C."/>
            <person name="Wu Z."/>
            <person name="Romero P."/>
            <person name="Gordon D."/>
            <person name="Zhang S."/>
            <person name="Yoo H."/>
            <person name="Tao Y."/>
            <person name="Biddle P."/>
            <person name="Jung M."/>
            <person name="Krespan W."/>
            <person name="Perry M."/>
            <person name="Gordon-Kamm B."/>
            <person name="Liao L."/>
            <person name="Kim S."/>
            <person name="Hendrick C."/>
            <person name="Zhao Z.-Y."/>
            <person name="Dolan M."/>
            <person name="Chumley F."/>
            <person name="Tingey S.V."/>
            <person name="Tomb J.-F."/>
            <person name="Gordon M.P."/>
            <person name="Olson M.V."/>
            <person name="Nester E.W."/>
        </authorList>
    </citation>
    <scope>NUCLEOTIDE SEQUENCE [LARGE SCALE GENOMIC DNA]</scope>
    <source>
        <strain>C58 / ATCC 33970</strain>
    </source>
</reference>
<reference key="2">
    <citation type="journal article" date="2001" name="Science">
        <title>Genome sequence of the plant pathogen and biotechnology agent Agrobacterium tumefaciens C58.</title>
        <authorList>
            <person name="Goodner B."/>
            <person name="Hinkle G."/>
            <person name="Gattung S."/>
            <person name="Miller N."/>
            <person name="Blanchard M."/>
            <person name="Qurollo B."/>
            <person name="Goldman B.S."/>
            <person name="Cao Y."/>
            <person name="Askenazi M."/>
            <person name="Halling C."/>
            <person name="Mullin L."/>
            <person name="Houmiel K."/>
            <person name="Gordon J."/>
            <person name="Vaudin M."/>
            <person name="Iartchouk O."/>
            <person name="Epp A."/>
            <person name="Liu F."/>
            <person name="Wollam C."/>
            <person name="Allinger M."/>
            <person name="Doughty D."/>
            <person name="Scott C."/>
            <person name="Lappas C."/>
            <person name="Markelz B."/>
            <person name="Flanagan C."/>
            <person name="Crowell C."/>
            <person name="Gurson J."/>
            <person name="Lomo C."/>
            <person name="Sear C."/>
            <person name="Strub G."/>
            <person name="Cielo C."/>
            <person name="Slater S."/>
        </authorList>
    </citation>
    <scope>NUCLEOTIDE SEQUENCE [LARGE SCALE GENOMIC DNA]</scope>
    <source>
        <strain>C58 / ATCC 33970</strain>
    </source>
</reference>
<sequence>MSGLFSSVGRKGLFLIDPEKAHGLSVAALKSGFLPTCMVPHDPRLQQTVAGLVFPNPLGMAAGYDKNAEVPGPLLRLGFGFTEIGTVTPRAQSGNPKPRIFRLVEDEGVINRLGFNNEGHAAALERLTQARLRGIVGVNIGANKDSEDRIADYVQGIEAFYAVASYFTVNISSPNTPGLRDLQARESLAALLTAVLERRKTEAERLGKRIPIFLKIAPDLTEEGLDDVAEEALAHDLDGLIVSNTTLSREGLRPGPHRGEAGGLSGKPLFELSTTVLAKMRRRVGANLPIIGVGGVSSAETALEKVRAGADLVQLYSCMVYEGPGLPSAIVKGMSKLVAREGVETIRDLRDSAVDRWADRKLG</sequence>